<feature type="signal peptide" evidence="1">
    <location>
        <begin position="1"/>
        <end position="21"/>
    </location>
</feature>
<feature type="chain" id="PRO_0000371361" description="Frizzled/smoothened-like sans CRD protein H">
    <location>
        <begin position="22"/>
        <end position="533"/>
    </location>
</feature>
<feature type="topological domain" description="Extracellular" evidence="1">
    <location>
        <begin position="22"/>
        <end position="103"/>
    </location>
</feature>
<feature type="transmembrane region" description="Helical; Name=1" evidence="1">
    <location>
        <begin position="104"/>
        <end position="124"/>
    </location>
</feature>
<feature type="topological domain" description="Cytoplasmic" evidence="1">
    <location>
        <begin position="125"/>
        <end position="134"/>
    </location>
</feature>
<feature type="transmembrane region" description="Helical; Name=2" evidence="1">
    <location>
        <begin position="135"/>
        <end position="155"/>
    </location>
</feature>
<feature type="topological domain" description="Extracellular" evidence="1">
    <location>
        <begin position="156"/>
        <end position="177"/>
    </location>
</feature>
<feature type="transmembrane region" description="Helical; Name=3" evidence="1">
    <location>
        <begin position="178"/>
        <end position="198"/>
    </location>
</feature>
<feature type="topological domain" description="Cytoplasmic" evidence="1">
    <location>
        <begin position="199"/>
        <end position="216"/>
    </location>
</feature>
<feature type="transmembrane region" description="Helical; Name=4" evidence="1">
    <location>
        <begin position="217"/>
        <end position="237"/>
    </location>
</feature>
<feature type="topological domain" description="Extracellular" evidence="1">
    <location>
        <begin position="238"/>
        <end position="259"/>
    </location>
</feature>
<feature type="transmembrane region" description="Helical; Name=5" evidence="1">
    <location>
        <begin position="260"/>
        <end position="280"/>
    </location>
</feature>
<feature type="topological domain" description="Cytoplasmic" evidence="1">
    <location>
        <begin position="281"/>
        <end position="302"/>
    </location>
</feature>
<feature type="transmembrane region" description="Helical; Name=6" evidence="1">
    <location>
        <begin position="303"/>
        <end position="323"/>
    </location>
</feature>
<feature type="topological domain" description="Extracellular" evidence="1">
    <location>
        <begin position="324"/>
        <end position="360"/>
    </location>
</feature>
<feature type="transmembrane region" description="Helical; Name=7" evidence="1">
    <location>
        <begin position="361"/>
        <end position="381"/>
    </location>
</feature>
<feature type="topological domain" description="Cytoplasmic" evidence="1">
    <location>
        <begin position="382"/>
        <end position="533"/>
    </location>
</feature>
<feature type="region of interest" description="Disordered" evidence="2">
    <location>
        <begin position="454"/>
        <end position="533"/>
    </location>
</feature>
<feature type="coiled-coil region" evidence="1">
    <location>
        <begin position="501"/>
        <end position="528"/>
    </location>
</feature>
<feature type="compositionally biased region" description="Low complexity" evidence="2">
    <location>
        <begin position="466"/>
        <end position="518"/>
    </location>
</feature>
<feature type="compositionally biased region" description="Polar residues" evidence="2">
    <location>
        <begin position="519"/>
        <end position="533"/>
    </location>
</feature>
<feature type="glycosylation site" description="N-linked (GlcNAc...) asparagine" evidence="1">
    <location>
        <position position="76"/>
    </location>
</feature>
<proteinExistence type="inferred from homology"/>
<sequence>MFIKFYFFIIFLILNFKNNYASPTLLDSVLSSTSSLSSPGSFFIETEFCPPPLLYRYSSDLEGDKGRGYKYVEFPNGTMSHCVHPCPSLYFSDGDWTTMMDMSLIVATISFFASIFLILTYSPLMNPSYNNRHTIGILSMSFGIFLIMFTDMYNLKKRFTLGCPSETRYAIQNDADCLITGLIFQFGCVSAVFFWTALSLDLYFQITNRNISRKYDLYYFIGVNLISLIFTFVPVISKSYGYGDFALGCWILDFNYALGCFWIPLSVCLIFSTVVVLMILYEVYKIYKASNQKTSLKGHIKPLLCLISNCFEFFYVFGYSLYLATKLTELHDNMDAYIKCLFLNSQNDPDSYTCPDHRLKLGPQFLFFLSLRLLGVSGIVFYGTNSKVRKIWKNSILINNRFIGKYFSFNSGTSTPVGSKNRSKTSSQLYDNSFGDSGILEEIREYDEKVKNGIIVTPGGDDDNINNNNNNNNNNNNNNNNNNNNNNNNNNNNNNNNNNNNNNNNNNNNNSNENNENNTQEIELTNINTIDNV</sequence>
<dbReference type="EMBL" id="AAFI02000187">
    <property type="protein sequence ID" value="EAL61406.1"/>
    <property type="molecule type" value="Genomic_DNA"/>
</dbReference>
<dbReference type="RefSeq" id="XP_629829.1">
    <property type="nucleotide sequence ID" value="XM_629827.1"/>
</dbReference>
<dbReference type="SMR" id="Q54DP3"/>
<dbReference type="FunCoup" id="Q54DP3">
    <property type="interactions" value="19"/>
</dbReference>
<dbReference type="STRING" id="44689.Q54DP3"/>
<dbReference type="GlyCosmos" id="Q54DP3">
    <property type="glycosylation" value="1 site, No reported glycans"/>
</dbReference>
<dbReference type="GlyGen" id="Q54DP3">
    <property type="glycosylation" value="2 sites"/>
</dbReference>
<dbReference type="PaxDb" id="44689-DDB0232060"/>
<dbReference type="EnsemblProtists" id="EAL61406">
    <property type="protein sequence ID" value="EAL61406"/>
    <property type="gene ID" value="DDB_G0292100"/>
</dbReference>
<dbReference type="GeneID" id="8628510"/>
<dbReference type="KEGG" id="ddi:DDB_G0292100"/>
<dbReference type="dictyBase" id="DDB_G0292100">
    <property type="gene designation" value="fscH"/>
</dbReference>
<dbReference type="VEuPathDB" id="AmoebaDB:DDB_G0292100"/>
<dbReference type="eggNOG" id="ENOG502REBT">
    <property type="taxonomic scope" value="Eukaryota"/>
</dbReference>
<dbReference type="HOGENOM" id="CLU_036764_0_0_1"/>
<dbReference type="InParanoid" id="Q54DP3"/>
<dbReference type="OMA" id="FALGCWI"/>
<dbReference type="PhylomeDB" id="Q54DP3"/>
<dbReference type="PRO" id="PR:Q54DP3"/>
<dbReference type="Proteomes" id="UP000002195">
    <property type="component" value="Chromosome 6"/>
</dbReference>
<dbReference type="GO" id="GO:0016020">
    <property type="term" value="C:membrane"/>
    <property type="evidence" value="ECO:0007669"/>
    <property type="project" value="UniProtKB-SubCell"/>
</dbReference>
<dbReference type="Gene3D" id="1.20.1070.10">
    <property type="entry name" value="Rhodopsin 7-helix transmembrane proteins"/>
    <property type="match status" value="1"/>
</dbReference>
<dbReference type="InterPro" id="IPR050949">
    <property type="entry name" value="GPCR_Fz/Smo-like"/>
</dbReference>
<dbReference type="PANTHER" id="PTHR31787:SF4">
    <property type="entry name" value="FRIZZLED_SMOOTHENED-LIKE SANS CRD PROTEIN H"/>
    <property type="match status" value="1"/>
</dbReference>
<dbReference type="PANTHER" id="PTHR31787">
    <property type="entry name" value="G-PROTEIN-COUPLED RECEPTOR GPCR FAMILY PROTEIN"/>
    <property type="match status" value="1"/>
</dbReference>
<dbReference type="SUPFAM" id="SSF81321">
    <property type="entry name" value="Family A G protein-coupled receptor-like"/>
    <property type="match status" value="1"/>
</dbReference>
<reference key="1">
    <citation type="journal article" date="2005" name="Nature">
        <title>The genome of the social amoeba Dictyostelium discoideum.</title>
        <authorList>
            <person name="Eichinger L."/>
            <person name="Pachebat J.A."/>
            <person name="Gloeckner G."/>
            <person name="Rajandream M.A."/>
            <person name="Sucgang R."/>
            <person name="Berriman M."/>
            <person name="Song J."/>
            <person name="Olsen R."/>
            <person name="Szafranski K."/>
            <person name="Xu Q."/>
            <person name="Tunggal B."/>
            <person name="Kummerfeld S."/>
            <person name="Madera M."/>
            <person name="Konfortov B.A."/>
            <person name="Rivero F."/>
            <person name="Bankier A.T."/>
            <person name="Lehmann R."/>
            <person name="Hamlin N."/>
            <person name="Davies R."/>
            <person name="Gaudet P."/>
            <person name="Fey P."/>
            <person name="Pilcher K."/>
            <person name="Chen G."/>
            <person name="Saunders D."/>
            <person name="Sodergren E.J."/>
            <person name="Davis P."/>
            <person name="Kerhornou A."/>
            <person name="Nie X."/>
            <person name="Hall N."/>
            <person name="Anjard C."/>
            <person name="Hemphill L."/>
            <person name="Bason N."/>
            <person name="Farbrother P."/>
            <person name="Desany B."/>
            <person name="Just E."/>
            <person name="Morio T."/>
            <person name="Rost R."/>
            <person name="Churcher C.M."/>
            <person name="Cooper J."/>
            <person name="Haydock S."/>
            <person name="van Driessche N."/>
            <person name="Cronin A."/>
            <person name="Goodhead I."/>
            <person name="Muzny D.M."/>
            <person name="Mourier T."/>
            <person name="Pain A."/>
            <person name="Lu M."/>
            <person name="Harper D."/>
            <person name="Lindsay R."/>
            <person name="Hauser H."/>
            <person name="James K.D."/>
            <person name="Quiles M."/>
            <person name="Madan Babu M."/>
            <person name="Saito T."/>
            <person name="Buchrieser C."/>
            <person name="Wardroper A."/>
            <person name="Felder M."/>
            <person name="Thangavelu M."/>
            <person name="Johnson D."/>
            <person name="Knights A."/>
            <person name="Loulseged H."/>
            <person name="Mungall K.L."/>
            <person name="Oliver K."/>
            <person name="Price C."/>
            <person name="Quail M.A."/>
            <person name="Urushihara H."/>
            <person name="Hernandez J."/>
            <person name="Rabbinowitsch E."/>
            <person name="Steffen D."/>
            <person name="Sanders M."/>
            <person name="Ma J."/>
            <person name="Kohara Y."/>
            <person name="Sharp S."/>
            <person name="Simmonds M.N."/>
            <person name="Spiegler S."/>
            <person name="Tivey A."/>
            <person name="Sugano S."/>
            <person name="White B."/>
            <person name="Walker D."/>
            <person name="Woodward J.R."/>
            <person name="Winckler T."/>
            <person name="Tanaka Y."/>
            <person name="Shaulsky G."/>
            <person name="Schleicher M."/>
            <person name="Weinstock G.M."/>
            <person name="Rosenthal A."/>
            <person name="Cox E.C."/>
            <person name="Chisholm R.L."/>
            <person name="Gibbs R.A."/>
            <person name="Loomis W.F."/>
            <person name="Platzer M."/>
            <person name="Kay R.R."/>
            <person name="Williams J.G."/>
            <person name="Dear P.H."/>
            <person name="Noegel A.A."/>
            <person name="Barrell B.G."/>
            <person name="Kuspa A."/>
        </authorList>
    </citation>
    <scope>NUCLEOTIDE SEQUENCE [LARGE SCALE GENOMIC DNA]</scope>
    <source>
        <strain>AX4</strain>
    </source>
</reference>
<reference key="2">
    <citation type="journal article" date="2006" name="Eur. J. Cell Biol.">
        <title>The Dictyostelium repertoire of seven transmembrane domain receptors.</title>
        <authorList>
            <person name="Prabhu Y."/>
            <person name="Eichinger L."/>
        </authorList>
    </citation>
    <scope>NOMENCLATURE</scope>
</reference>
<evidence type="ECO:0000255" key="1"/>
<evidence type="ECO:0000256" key="2">
    <source>
        <dbReference type="SAM" id="MobiDB-lite"/>
    </source>
</evidence>
<evidence type="ECO:0000305" key="3"/>
<gene>
    <name type="primary">fscH</name>
    <name type="ORF">DDB_G0292100</name>
</gene>
<organism>
    <name type="scientific">Dictyostelium discoideum</name>
    <name type="common">Social amoeba</name>
    <dbReference type="NCBI Taxonomy" id="44689"/>
    <lineage>
        <taxon>Eukaryota</taxon>
        <taxon>Amoebozoa</taxon>
        <taxon>Evosea</taxon>
        <taxon>Eumycetozoa</taxon>
        <taxon>Dictyostelia</taxon>
        <taxon>Dictyosteliales</taxon>
        <taxon>Dictyosteliaceae</taxon>
        <taxon>Dictyostelium</taxon>
    </lineage>
</organism>
<name>FSCH_DICDI</name>
<keyword id="KW-0175">Coiled coil</keyword>
<keyword id="KW-0325">Glycoprotein</keyword>
<keyword id="KW-0472">Membrane</keyword>
<keyword id="KW-0675">Receptor</keyword>
<keyword id="KW-1185">Reference proteome</keyword>
<keyword id="KW-0732">Signal</keyword>
<keyword id="KW-0812">Transmembrane</keyword>
<keyword id="KW-1133">Transmembrane helix</keyword>
<protein>
    <recommendedName>
        <fullName>Frizzled/smoothened-like sans CRD protein H</fullName>
    </recommendedName>
</protein>
<accession>Q54DP3</accession>
<comment type="subcellular location">
    <subcellularLocation>
        <location evidence="3">Membrane</location>
        <topology evidence="3">Multi-pass membrane protein</topology>
    </subcellularLocation>
</comment>
<comment type="similarity">
    <text evidence="3">Belongs to the G-protein coupled receptor Fz/Smo family.</text>
</comment>